<feature type="chain" id="PRO_0000351133" description="Tubby-like F-box protein 14">
    <location>
        <begin position="1"/>
        <end position="445"/>
    </location>
</feature>
<feature type="domain" description="F-box">
    <location>
        <begin position="56"/>
        <end position="114"/>
    </location>
</feature>
<feature type="sequence conflict" description="In Ref. 6; AK102298." evidence="2" ref="6">
    <original>D</original>
    <variation>N</variation>
    <location>
        <position position="52"/>
    </location>
</feature>
<sequence length="445" mass="49087">MSFRSIVRDVRDGFGSLSRRGFEVRLVGHRRGRSHSAVHELRDGHAAAAAADVVQSSCWANLPPELLRDVIERLEASEAAWPSRKNVVACAAVCRTWRDMCREIVKNPEFCGKITFPVSLKQPGPRNGAIQCFIKRDKSTQTYNLYLCLSSAVLVESGKFLLSAKRYSRATCTEYTIFMSADNTSRSSNMYIGKLRSNLLGTKFVIYDTQPPCNTANVSQSGKTSRRFYSRKVSPKNPSSTYSIAQVSYELNVLGTRGPRRMNCVMHSIPASSLEAGGTVPCQPDSVLARSLDESFGSISFSKSSIMDRSIRFSSSRYSDISVGGPMVGGQALGDSDESKERPLILRNKAPRWHEQLQCWCLNFKGRVTVASVKNFQLVAATQPAAGAPTPSQPAPPPPPDHDKVILQFGKVAKDMFTMDYRYPLSAFQAFAICLSSFDTKLACE</sequence>
<gene>
    <name type="primary">TULP14</name>
    <name type="synonym">TULP4</name>
    <name type="ordered locus">Os12g0163400</name>
    <name type="ordered locus">LOC_Os12g06630</name>
    <name type="ORF">OsJ_033954</name>
</gene>
<protein>
    <recommendedName>
        <fullName>Tubby-like F-box protein 14</fullName>
        <shortName>OsTLP14</shortName>
    </recommendedName>
    <alternativeName>
        <fullName>Tubby-like F-box protein 4</fullName>
        <shortName>OsTLP4</shortName>
    </alternativeName>
</protein>
<organism>
    <name type="scientific">Oryza sativa subsp. japonica</name>
    <name type="common">Rice</name>
    <dbReference type="NCBI Taxonomy" id="39947"/>
    <lineage>
        <taxon>Eukaryota</taxon>
        <taxon>Viridiplantae</taxon>
        <taxon>Streptophyta</taxon>
        <taxon>Embryophyta</taxon>
        <taxon>Tracheophyta</taxon>
        <taxon>Spermatophyta</taxon>
        <taxon>Magnoliopsida</taxon>
        <taxon>Liliopsida</taxon>
        <taxon>Poales</taxon>
        <taxon>Poaceae</taxon>
        <taxon>BOP clade</taxon>
        <taxon>Oryzoideae</taxon>
        <taxon>Oryzeae</taxon>
        <taxon>Oryzinae</taxon>
        <taxon>Oryza</taxon>
        <taxon>Oryza sativa</taxon>
    </lineage>
</organism>
<keyword id="KW-1185">Reference proteome</keyword>
<proteinExistence type="evidence at transcript level"/>
<dbReference type="EMBL" id="DP000011">
    <property type="protein sequence ID" value="ABA95864.1"/>
    <property type="molecule type" value="Genomic_DNA"/>
</dbReference>
<dbReference type="EMBL" id="AP008218">
    <property type="protein sequence ID" value="BAF29249.1"/>
    <property type="molecule type" value="Genomic_DNA"/>
</dbReference>
<dbReference type="EMBL" id="AP014968">
    <property type="protein sequence ID" value="BAT16010.1"/>
    <property type="molecule type" value="Genomic_DNA"/>
</dbReference>
<dbReference type="EMBL" id="CM000149">
    <property type="protein sequence ID" value="EAZ19745.1"/>
    <property type="molecule type" value="Genomic_DNA"/>
</dbReference>
<dbReference type="EMBL" id="AK102298">
    <property type="status" value="NOT_ANNOTATED_CDS"/>
    <property type="molecule type" value="mRNA"/>
</dbReference>
<dbReference type="RefSeq" id="XP_015619922.1">
    <property type="nucleotide sequence ID" value="XM_015764436.1"/>
</dbReference>
<dbReference type="SMR" id="Q2QXB2"/>
<dbReference type="FunCoup" id="Q2QXB2">
    <property type="interactions" value="2019"/>
</dbReference>
<dbReference type="STRING" id="39947.Q2QXB2"/>
<dbReference type="PaxDb" id="39947-Q2QXB2"/>
<dbReference type="EnsemblPlants" id="Os12t0163400-01">
    <property type="protein sequence ID" value="Os12t0163400-01"/>
    <property type="gene ID" value="Os12g0163400"/>
</dbReference>
<dbReference type="Gramene" id="Os12t0163400-01">
    <property type="protein sequence ID" value="Os12t0163400-01"/>
    <property type="gene ID" value="Os12g0163400"/>
</dbReference>
<dbReference type="KEGG" id="dosa:Os12g0163400"/>
<dbReference type="eggNOG" id="KOG2502">
    <property type="taxonomic scope" value="Eukaryota"/>
</dbReference>
<dbReference type="HOGENOM" id="CLU_028236_3_0_1"/>
<dbReference type="InParanoid" id="Q2QXB2"/>
<dbReference type="OMA" id="NESKECP"/>
<dbReference type="OrthoDB" id="8775810at2759"/>
<dbReference type="Proteomes" id="UP000000763">
    <property type="component" value="Chromosome 12"/>
</dbReference>
<dbReference type="Proteomes" id="UP000007752">
    <property type="component" value="Chromosome 12"/>
</dbReference>
<dbReference type="Proteomes" id="UP000059680">
    <property type="component" value="Chromosome 12"/>
</dbReference>
<dbReference type="ExpressionAtlas" id="Q2QXB2">
    <property type="expression patterns" value="baseline and differential"/>
</dbReference>
<dbReference type="CDD" id="cd22153">
    <property type="entry name" value="F-box_AtTLP-like"/>
    <property type="match status" value="1"/>
</dbReference>
<dbReference type="Gene3D" id="1.20.1280.50">
    <property type="match status" value="1"/>
</dbReference>
<dbReference type="Gene3D" id="3.20.90.10">
    <property type="entry name" value="Tubby Protein, Chain A"/>
    <property type="match status" value="1"/>
</dbReference>
<dbReference type="InterPro" id="IPR036047">
    <property type="entry name" value="F-box-like_dom_sf"/>
</dbReference>
<dbReference type="InterPro" id="IPR001810">
    <property type="entry name" value="F-box_dom"/>
</dbReference>
<dbReference type="InterPro" id="IPR025659">
    <property type="entry name" value="Tubby-like_C"/>
</dbReference>
<dbReference type="InterPro" id="IPR000007">
    <property type="entry name" value="Tubby_C"/>
</dbReference>
<dbReference type="InterPro" id="IPR018066">
    <property type="entry name" value="Tubby_C_CS"/>
</dbReference>
<dbReference type="PANTHER" id="PTHR16517:SF95">
    <property type="entry name" value="TUBBY-LIKE F-BOX PROTEIN 14"/>
    <property type="match status" value="1"/>
</dbReference>
<dbReference type="PANTHER" id="PTHR16517">
    <property type="entry name" value="TUBBY-RELATED"/>
    <property type="match status" value="1"/>
</dbReference>
<dbReference type="Pfam" id="PF12937">
    <property type="entry name" value="F-box-like"/>
    <property type="match status" value="1"/>
</dbReference>
<dbReference type="Pfam" id="PF01167">
    <property type="entry name" value="Tub"/>
    <property type="match status" value="1"/>
</dbReference>
<dbReference type="PRINTS" id="PR01573">
    <property type="entry name" value="SUPERTUBBY"/>
</dbReference>
<dbReference type="SUPFAM" id="SSF81383">
    <property type="entry name" value="F-box domain"/>
    <property type="match status" value="1"/>
</dbReference>
<dbReference type="SUPFAM" id="SSF54518">
    <property type="entry name" value="Tubby C-terminal domain-like"/>
    <property type="match status" value="1"/>
</dbReference>
<dbReference type="PROSITE" id="PS01200">
    <property type="entry name" value="TUB_1"/>
    <property type="match status" value="1"/>
</dbReference>
<dbReference type="PROSITE" id="PS01201">
    <property type="entry name" value="TUB_2"/>
    <property type="match status" value="1"/>
</dbReference>
<reference key="1">
    <citation type="journal article" date="2005" name="BMC Biol.">
        <title>The sequence of rice chromosomes 11 and 12, rich in disease resistance genes and recent gene duplications.</title>
        <authorList>
            <consortium name="The rice chromosomes 11 and 12 sequencing consortia"/>
        </authorList>
    </citation>
    <scope>NUCLEOTIDE SEQUENCE [LARGE SCALE GENOMIC DNA]</scope>
    <source>
        <strain>cv. Nipponbare</strain>
    </source>
</reference>
<reference key="2">
    <citation type="journal article" date="2005" name="Nature">
        <title>The map-based sequence of the rice genome.</title>
        <authorList>
            <consortium name="International rice genome sequencing project (IRGSP)"/>
        </authorList>
    </citation>
    <scope>NUCLEOTIDE SEQUENCE [LARGE SCALE GENOMIC DNA]</scope>
    <source>
        <strain>cv. Nipponbare</strain>
    </source>
</reference>
<reference key="3">
    <citation type="journal article" date="2008" name="Nucleic Acids Res.">
        <title>The rice annotation project database (RAP-DB): 2008 update.</title>
        <authorList>
            <consortium name="The rice annotation project (RAP)"/>
        </authorList>
    </citation>
    <scope>GENOME REANNOTATION</scope>
    <source>
        <strain>cv. Nipponbare</strain>
    </source>
</reference>
<reference key="4">
    <citation type="journal article" date="2013" name="Rice">
        <title>Improvement of the Oryza sativa Nipponbare reference genome using next generation sequence and optical map data.</title>
        <authorList>
            <person name="Kawahara Y."/>
            <person name="de la Bastide M."/>
            <person name="Hamilton J.P."/>
            <person name="Kanamori H."/>
            <person name="McCombie W.R."/>
            <person name="Ouyang S."/>
            <person name="Schwartz D.C."/>
            <person name="Tanaka T."/>
            <person name="Wu J."/>
            <person name="Zhou S."/>
            <person name="Childs K.L."/>
            <person name="Davidson R.M."/>
            <person name="Lin H."/>
            <person name="Quesada-Ocampo L."/>
            <person name="Vaillancourt B."/>
            <person name="Sakai H."/>
            <person name="Lee S.S."/>
            <person name="Kim J."/>
            <person name="Numa H."/>
            <person name="Itoh T."/>
            <person name="Buell C.R."/>
            <person name="Matsumoto T."/>
        </authorList>
    </citation>
    <scope>GENOME REANNOTATION</scope>
    <source>
        <strain>cv. Nipponbare</strain>
    </source>
</reference>
<reference key="5">
    <citation type="journal article" date="2005" name="PLoS Biol.">
        <title>The genomes of Oryza sativa: a history of duplications.</title>
        <authorList>
            <person name="Yu J."/>
            <person name="Wang J."/>
            <person name="Lin W."/>
            <person name="Li S."/>
            <person name="Li H."/>
            <person name="Zhou J."/>
            <person name="Ni P."/>
            <person name="Dong W."/>
            <person name="Hu S."/>
            <person name="Zeng C."/>
            <person name="Zhang J."/>
            <person name="Zhang Y."/>
            <person name="Li R."/>
            <person name="Xu Z."/>
            <person name="Li S."/>
            <person name="Li X."/>
            <person name="Zheng H."/>
            <person name="Cong L."/>
            <person name="Lin L."/>
            <person name="Yin J."/>
            <person name="Geng J."/>
            <person name="Li G."/>
            <person name="Shi J."/>
            <person name="Liu J."/>
            <person name="Lv H."/>
            <person name="Li J."/>
            <person name="Wang J."/>
            <person name="Deng Y."/>
            <person name="Ran L."/>
            <person name="Shi X."/>
            <person name="Wang X."/>
            <person name="Wu Q."/>
            <person name="Li C."/>
            <person name="Ren X."/>
            <person name="Wang J."/>
            <person name="Wang X."/>
            <person name="Li D."/>
            <person name="Liu D."/>
            <person name="Zhang X."/>
            <person name="Ji Z."/>
            <person name="Zhao W."/>
            <person name="Sun Y."/>
            <person name="Zhang Z."/>
            <person name="Bao J."/>
            <person name="Han Y."/>
            <person name="Dong L."/>
            <person name="Ji J."/>
            <person name="Chen P."/>
            <person name="Wu S."/>
            <person name="Liu J."/>
            <person name="Xiao Y."/>
            <person name="Bu D."/>
            <person name="Tan J."/>
            <person name="Yang L."/>
            <person name="Ye C."/>
            <person name="Zhang J."/>
            <person name="Xu J."/>
            <person name="Zhou Y."/>
            <person name="Yu Y."/>
            <person name="Zhang B."/>
            <person name="Zhuang S."/>
            <person name="Wei H."/>
            <person name="Liu B."/>
            <person name="Lei M."/>
            <person name="Yu H."/>
            <person name="Li Y."/>
            <person name="Xu H."/>
            <person name="Wei S."/>
            <person name="He X."/>
            <person name="Fang L."/>
            <person name="Zhang Z."/>
            <person name="Zhang Y."/>
            <person name="Huang X."/>
            <person name="Su Z."/>
            <person name="Tong W."/>
            <person name="Li J."/>
            <person name="Tong Z."/>
            <person name="Li S."/>
            <person name="Ye J."/>
            <person name="Wang L."/>
            <person name="Fang L."/>
            <person name="Lei T."/>
            <person name="Chen C.-S."/>
            <person name="Chen H.-C."/>
            <person name="Xu Z."/>
            <person name="Li H."/>
            <person name="Huang H."/>
            <person name="Zhang F."/>
            <person name="Xu H."/>
            <person name="Li N."/>
            <person name="Zhao C."/>
            <person name="Li S."/>
            <person name="Dong L."/>
            <person name="Huang Y."/>
            <person name="Li L."/>
            <person name="Xi Y."/>
            <person name="Qi Q."/>
            <person name="Li W."/>
            <person name="Zhang B."/>
            <person name="Hu W."/>
            <person name="Zhang Y."/>
            <person name="Tian X."/>
            <person name="Jiao Y."/>
            <person name="Liang X."/>
            <person name="Jin J."/>
            <person name="Gao L."/>
            <person name="Zheng W."/>
            <person name="Hao B."/>
            <person name="Liu S.-M."/>
            <person name="Wang W."/>
            <person name="Yuan L."/>
            <person name="Cao M."/>
            <person name="McDermott J."/>
            <person name="Samudrala R."/>
            <person name="Wang J."/>
            <person name="Wong G.K.-S."/>
            <person name="Yang H."/>
        </authorList>
    </citation>
    <scope>NUCLEOTIDE SEQUENCE [LARGE SCALE GENOMIC DNA]</scope>
    <source>
        <strain>cv. Nipponbare</strain>
    </source>
</reference>
<reference key="6">
    <citation type="journal article" date="2003" name="Science">
        <title>Collection, mapping, and annotation of over 28,000 cDNA clones from japonica rice.</title>
        <authorList>
            <consortium name="The rice full-length cDNA consortium"/>
        </authorList>
    </citation>
    <scope>NUCLEOTIDE SEQUENCE [LARGE SCALE MRNA]</scope>
    <source>
        <strain>cv. Nipponbare</strain>
    </source>
</reference>
<reference key="7">
    <citation type="journal article" date="2008" name="FEBS J.">
        <title>Identification of rice TUBBY-like genes and their evolution.</title>
        <authorList>
            <person name="Liu Q."/>
        </authorList>
    </citation>
    <scope>GENE FAMILY</scope>
    <scope>NOMENCLATURE</scope>
</reference>
<reference key="8">
    <citation type="journal article" date="2008" name="Genomics">
        <title>Genomewide comparative phylogenetic and molecular evolutionary analysis of tubby-like protein family in Arabidopsis, rice, and poplar.</title>
        <authorList>
            <person name="Yang Z."/>
            <person name="Zhou Y."/>
            <person name="Wang X."/>
            <person name="Gu S."/>
            <person name="Yu J."/>
            <person name="Liang G."/>
            <person name="Yan C."/>
            <person name="Xu C."/>
        </authorList>
    </citation>
    <scope>TISSUE SPECIFICITY</scope>
    <scope>GENE FAMILY</scope>
    <scope>NOMENCLATURE</scope>
</reference>
<comment type="tissue specificity">
    <text evidence="1">Ubiquitous.</text>
</comment>
<comment type="similarity">
    <text evidence="2">Belongs to the TUB family.</text>
</comment>
<evidence type="ECO:0000269" key="1">
    <source>
    </source>
</evidence>
<evidence type="ECO:0000305" key="2"/>
<name>TLP14_ORYSJ</name>
<accession>Q2QXB2</accession>